<keyword id="KW-0472">Membrane</keyword>
<keyword id="KW-1185">Reference proteome</keyword>
<keyword id="KW-0812">Transmembrane</keyword>
<keyword id="KW-1133">Transmembrane helix</keyword>
<dbReference type="EMBL" id="BC110716">
    <property type="protein sequence ID" value="AAI10717.1"/>
    <property type="molecule type" value="mRNA"/>
</dbReference>
<dbReference type="SMR" id="Q2TAV2"/>
<dbReference type="AGR" id="Xenbase:XB-GENE-17335348"/>
<dbReference type="Xenbase" id="XB-GENE-17335348">
    <property type="gene designation" value="tmem248.S"/>
</dbReference>
<dbReference type="Proteomes" id="UP000186698">
    <property type="component" value="Unplaced"/>
</dbReference>
<dbReference type="GO" id="GO:0016020">
    <property type="term" value="C:membrane"/>
    <property type="evidence" value="ECO:0007669"/>
    <property type="project" value="UniProtKB-SubCell"/>
</dbReference>
<dbReference type="InterPro" id="IPR039493">
    <property type="entry name" value="TMEM248/TMEM219"/>
</dbReference>
<dbReference type="InterPro" id="IPR039587">
    <property type="entry name" value="TMEM248/TMEM219_dom"/>
</dbReference>
<dbReference type="PANTHER" id="PTHR16002:SF5">
    <property type="entry name" value="TRANSMEMBRANE PROTEIN 248"/>
    <property type="match status" value="1"/>
</dbReference>
<dbReference type="PANTHER" id="PTHR16002">
    <property type="entry name" value="TRANSMEMBRANE PROTEIN 248-LIKE"/>
    <property type="match status" value="1"/>
</dbReference>
<dbReference type="Pfam" id="PF14940">
    <property type="entry name" value="TMEM219"/>
    <property type="match status" value="1"/>
</dbReference>
<comment type="subcellular location">
    <subcellularLocation>
        <location evidence="3">Membrane</location>
        <topology evidence="3">Multi-pass membrane protein</topology>
    </subcellularLocation>
</comment>
<comment type="similarity">
    <text evidence="3">Belongs to the TMEM248 family.</text>
</comment>
<evidence type="ECO:0000255" key="1"/>
<evidence type="ECO:0000256" key="2">
    <source>
        <dbReference type="SAM" id="MobiDB-lite"/>
    </source>
</evidence>
<evidence type="ECO:0000305" key="3"/>
<feature type="chain" id="PRO_0000295130" description="Transmembrane protein 248">
    <location>
        <begin position="1"/>
        <end position="315"/>
    </location>
</feature>
<feature type="transmembrane region" description="Helical" evidence="1">
    <location>
        <begin position="22"/>
        <end position="42"/>
    </location>
</feature>
<feature type="transmembrane region" description="Helical" evidence="1">
    <location>
        <begin position="180"/>
        <end position="200"/>
    </location>
</feature>
<feature type="transmembrane region" description="Helical" evidence="1">
    <location>
        <begin position="271"/>
        <end position="291"/>
    </location>
</feature>
<feature type="region of interest" description="Disordered" evidence="2">
    <location>
        <begin position="82"/>
        <end position="106"/>
    </location>
</feature>
<feature type="compositionally biased region" description="Polar residues" evidence="2">
    <location>
        <begin position="82"/>
        <end position="103"/>
    </location>
</feature>
<sequence>MILNLHPLENLKSYISSRPPLVIFMVSVSGMAIAFLTLGYFFKMKEIKSPGMTEDWNIFLLRFNNLDLCVSENETLKHFLNETTPPESTVTSGQARSSTQTPQALEDSGPINISVAITLTLDPLKPFGGYSRNITHLSSTIFGHQIGLSGRDSHEEMNITFTLPAAWNSDDCIVHGHCEQVVFTTCMTVTAVTNVFPVTVQPPHCIPETYSNASLWYKIYTTARDSGTKNAQDYNPFWCYKGAIGKVYHALNPKLTVIVPEDDRSLINLHLMDTSYFLFVMVITMFCYAVIRGRPSKLRQSKSEFLPEKVALSDA</sequence>
<accession>Q2TAV2</accession>
<reference key="1">
    <citation type="submission" date="2005-12" db="EMBL/GenBank/DDBJ databases">
        <authorList>
            <consortium name="NIH - Xenopus Gene Collection (XGC) project"/>
        </authorList>
    </citation>
    <scope>NUCLEOTIDE SEQUENCE [LARGE SCALE MRNA]</scope>
    <source>
        <tissue>Embryo</tissue>
    </source>
</reference>
<proteinExistence type="evidence at transcript level"/>
<protein>
    <recommendedName>
        <fullName>Transmembrane protein 248</fullName>
    </recommendedName>
</protein>
<organism>
    <name type="scientific">Xenopus laevis</name>
    <name type="common">African clawed frog</name>
    <dbReference type="NCBI Taxonomy" id="8355"/>
    <lineage>
        <taxon>Eukaryota</taxon>
        <taxon>Metazoa</taxon>
        <taxon>Chordata</taxon>
        <taxon>Craniata</taxon>
        <taxon>Vertebrata</taxon>
        <taxon>Euteleostomi</taxon>
        <taxon>Amphibia</taxon>
        <taxon>Batrachia</taxon>
        <taxon>Anura</taxon>
        <taxon>Pipoidea</taxon>
        <taxon>Pipidae</taxon>
        <taxon>Xenopodinae</taxon>
        <taxon>Xenopus</taxon>
        <taxon>Xenopus</taxon>
    </lineage>
</organism>
<name>TM248_XENLA</name>
<gene>
    <name type="primary">tmem248</name>
</gene>